<evidence type="ECO:0000255" key="1">
    <source>
        <dbReference type="HAMAP-Rule" id="MF_00171"/>
    </source>
</evidence>
<comment type="function">
    <text evidence="1">Formation of pseudouridine at positions 38, 39 and 40 in the anticodon stem and loop of transfer RNAs.</text>
</comment>
<comment type="catalytic activity">
    <reaction evidence="1">
        <text>uridine(38/39/40) in tRNA = pseudouridine(38/39/40) in tRNA</text>
        <dbReference type="Rhea" id="RHEA:22376"/>
        <dbReference type="Rhea" id="RHEA-COMP:10085"/>
        <dbReference type="Rhea" id="RHEA-COMP:10087"/>
        <dbReference type="ChEBI" id="CHEBI:65314"/>
        <dbReference type="ChEBI" id="CHEBI:65315"/>
        <dbReference type="EC" id="5.4.99.12"/>
    </reaction>
</comment>
<comment type="subunit">
    <text evidence="1">Homodimer.</text>
</comment>
<comment type="similarity">
    <text evidence="1">Belongs to the tRNA pseudouridine synthase TruA family.</text>
</comment>
<sequence length="247" mass="27734">MPRFRLIVEYDGTDYVGWQRQDNGPSVQGAIEKAVLSLTGETVRVRGAGRTDSGVHARGQVAHLDLTRAWKPYTLQNALNAHLSLAGERVSILEVEEAAADFDARFSAIRRHYLYRIISRRSPLALEARRAWWVPKALDHDAMHEAAQRLLGHHDFTTFRSANCQATSPMRTLDRLDVTRTGDLIEIRASAQSFLHNQIRSFAGSLKLVGESKWTPDNLQAALEARDRKACGPVAPPDGLYFMRVDY</sequence>
<proteinExistence type="inferred from homology"/>
<accession>A6U5I6</accession>
<name>TRUA_SINMW</name>
<feature type="chain" id="PRO_1000017180" description="tRNA pseudouridine synthase A">
    <location>
        <begin position="1"/>
        <end position="247"/>
    </location>
</feature>
<feature type="active site" description="Nucleophile" evidence="1">
    <location>
        <position position="52"/>
    </location>
</feature>
<feature type="binding site" evidence="1">
    <location>
        <position position="113"/>
    </location>
    <ligand>
        <name>substrate</name>
    </ligand>
</feature>
<gene>
    <name evidence="1" type="primary">truA</name>
    <name type="ordered locus">Smed_0056</name>
</gene>
<dbReference type="EC" id="5.4.99.12" evidence="1"/>
<dbReference type="EMBL" id="CP000738">
    <property type="protein sequence ID" value="ABR58916.1"/>
    <property type="molecule type" value="Genomic_DNA"/>
</dbReference>
<dbReference type="RefSeq" id="WP_011974270.1">
    <property type="nucleotide sequence ID" value="NC_009636.1"/>
</dbReference>
<dbReference type="RefSeq" id="YP_001325751.1">
    <property type="nucleotide sequence ID" value="NC_009636.1"/>
</dbReference>
<dbReference type="SMR" id="A6U5I6"/>
<dbReference type="STRING" id="366394.Smed_0056"/>
<dbReference type="GeneID" id="61611183"/>
<dbReference type="KEGG" id="smd:Smed_0056"/>
<dbReference type="PATRIC" id="fig|366394.8.peg.3111"/>
<dbReference type="eggNOG" id="COG0101">
    <property type="taxonomic scope" value="Bacteria"/>
</dbReference>
<dbReference type="HOGENOM" id="CLU_014673_0_2_5"/>
<dbReference type="OrthoDB" id="9811823at2"/>
<dbReference type="Proteomes" id="UP000001108">
    <property type="component" value="Chromosome"/>
</dbReference>
<dbReference type="GO" id="GO:0003723">
    <property type="term" value="F:RNA binding"/>
    <property type="evidence" value="ECO:0007669"/>
    <property type="project" value="InterPro"/>
</dbReference>
<dbReference type="GO" id="GO:0160147">
    <property type="term" value="F:tRNA pseudouridine(38-40) synthase activity"/>
    <property type="evidence" value="ECO:0007669"/>
    <property type="project" value="UniProtKB-EC"/>
</dbReference>
<dbReference type="GO" id="GO:0031119">
    <property type="term" value="P:tRNA pseudouridine synthesis"/>
    <property type="evidence" value="ECO:0007669"/>
    <property type="project" value="UniProtKB-UniRule"/>
</dbReference>
<dbReference type="CDD" id="cd02570">
    <property type="entry name" value="PseudoU_synth_EcTruA"/>
    <property type="match status" value="1"/>
</dbReference>
<dbReference type="FunFam" id="3.30.70.580:FF:000001">
    <property type="entry name" value="tRNA pseudouridine synthase A"/>
    <property type="match status" value="1"/>
</dbReference>
<dbReference type="Gene3D" id="3.30.70.660">
    <property type="entry name" value="Pseudouridine synthase I, catalytic domain, C-terminal subdomain"/>
    <property type="match status" value="1"/>
</dbReference>
<dbReference type="Gene3D" id="3.30.70.580">
    <property type="entry name" value="Pseudouridine synthase I, catalytic domain, N-terminal subdomain"/>
    <property type="match status" value="1"/>
</dbReference>
<dbReference type="HAMAP" id="MF_00171">
    <property type="entry name" value="TruA"/>
    <property type="match status" value="1"/>
</dbReference>
<dbReference type="InterPro" id="IPR020103">
    <property type="entry name" value="PsdUridine_synth_cat_dom_sf"/>
</dbReference>
<dbReference type="InterPro" id="IPR001406">
    <property type="entry name" value="PsdUridine_synth_TruA"/>
</dbReference>
<dbReference type="InterPro" id="IPR020097">
    <property type="entry name" value="PsdUridine_synth_TruA_a/b_dom"/>
</dbReference>
<dbReference type="InterPro" id="IPR020095">
    <property type="entry name" value="PsdUridine_synth_TruA_C"/>
</dbReference>
<dbReference type="InterPro" id="IPR020094">
    <property type="entry name" value="TruA/RsuA/RluB/E/F_N"/>
</dbReference>
<dbReference type="NCBIfam" id="TIGR00071">
    <property type="entry name" value="hisT_truA"/>
    <property type="match status" value="1"/>
</dbReference>
<dbReference type="PANTHER" id="PTHR11142">
    <property type="entry name" value="PSEUDOURIDYLATE SYNTHASE"/>
    <property type="match status" value="1"/>
</dbReference>
<dbReference type="PANTHER" id="PTHR11142:SF0">
    <property type="entry name" value="TRNA PSEUDOURIDINE SYNTHASE-LIKE 1"/>
    <property type="match status" value="1"/>
</dbReference>
<dbReference type="Pfam" id="PF01416">
    <property type="entry name" value="PseudoU_synth_1"/>
    <property type="match status" value="2"/>
</dbReference>
<dbReference type="PIRSF" id="PIRSF001430">
    <property type="entry name" value="tRNA_psdUrid_synth"/>
    <property type="match status" value="1"/>
</dbReference>
<dbReference type="SUPFAM" id="SSF55120">
    <property type="entry name" value="Pseudouridine synthase"/>
    <property type="match status" value="1"/>
</dbReference>
<protein>
    <recommendedName>
        <fullName evidence="1">tRNA pseudouridine synthase A</fullName>
        <ecNumber evidence="1">5.4.99.12</ecNumber>
    </recommendedName>
    <alternativeName>
        <fullName evidence="1">tRNA pseudouridine(38-40) synthase</fullName>
    </alternativeName>
    <alternativeName>
        <fullName evidence="1">tRNA pseudouridylate synthase I</fullName>
    </alternativeName>
    <alternativeName>
        <fullName evidence="1">tRNA-uridine isomerase I</fullName>
    </alternativeName>
</protein>
<keyword id="KW-0413">Isomerase</keyword>
<keyword id="KW-0819">tRNA processing</keyword>
<reference key="1">
    <citation type="submission" date="2007-06" db="EMBL/GenBank/DDBJ databases">
        <title>Complete sequence of Sinorhizobium medicae WSM419 chromosome.</title>
        <authorList>
            <consortium name="US DOE Joint Genome Institute"/>
            <person name="Copeland A."/>
            <person name="Lucas S."/>
            <person name="Lapidus A."/>
            <person name="Barry K."/>
            <person name="Glavina del Rio T."/>
            <person name="Dalin E."/>
            <person name="Tice H."/>
            <person name="Pitluck S."/>
            <person name="Chain P."/>
            <person name="Malfatti S."/>
            <person name="Shin M."/>
            <person name="Vergez L."/>
            <person name="Schmutz J."/>
            <person name="Larimer F."/>
            <person name="Land M."/>
            <person name="Hauser L."/>
            <person name="Kyrpides N."/>
            <person name="Mikhailova N."/>
            <person name="Reeve W.G."/>
            <person name="Richardson P."/>
        </authorList>
    </citation>
    <scope>NUCLEOTIDE SEQUENCE [LARGE SCALE GENOMIC DNA]</scope>
    <source>
        <strain>WSM419</strain>
    </source>
</reference>
<organism>
    <name type="scientific">Sinorhizobium medicae (strain WSM419)</name>
    <name type="common">Ensifer medicae</name>
    <dbReference type="NCBI Taxonomy" id="366394"/>
    <lineage>
        <taxon>Bacteria</taxon>
        <taxon>Pseudomonadati</taxon>
        <taxon>Pseudomonadota</taxon>
        <taxon>Alphaproteobacteria</taxon>
        <taxon>Hyphomicrobiales</taxon>
        <taxon>Rhizobiaceae</taxon>
        <taxon>Sinorhizobium/Ensifer group</taxon>
        <taxon>Sinorhizobium</taxon>
    </lineage>
</organism>